<feature type="chain" id="PRO_0000340332" description="DNA ligase">
    <location>
        <begin position="1"/>
        <end position="647"/>
    </location>
</feature>
<feature type="domain" description="BRCT" evidence="1">
    <location>
        <begin position="569"/>
        <end position="647"/>
    </location>
</feature>
<feature type="active site" description="N6-AMP-lysine intermediate" evidence="1">
    <location>
        <position position="108"/>
    </location>
</feature>
<feature type="binding site" evidence="1">
    <location>
        <begin position="30"/>
        <end position="34"/>
    </location>
    <ligand>
        <name>NAD(+)</name>
        <dbReference type="ChEBI" id="CHEBI:57540"/>
    </ligand>
</feature>
<feature type="binding site" evidence="1">
    <location>
        <begin position="79"/>
        <end position="80"/>
    </location>
    <ligand>
        <name>NAD(+)</name>
        <dbReference type="ChEBI" id="CHEBI:57540"/>
    </ligand>
</feature>
<feature type="binding site" evidence="1">
    <location>
        <position position="106"/>
    </location>
    <ligand>
        <name>NAD(+)</name>
        <dbReference type="ChEBI" id="CHEBI:57540"/>
    </ligand>
</feature>
<feature type="binding site" evidence="1">
    <location>
        <position position="129"/>
    </location>
    <ligand>
        <name>NAD(+)</name>
        <dbReference type="ChEBI" id="CHEBI:57540"/>
    </ligand>
</feature>
<feature type="binding site" evidence="1">
    <location>
        <position position="163"/>
    </location>
    <ligand>
        <name>NAD(+)</name>
        <dbReference type="ChEBI" id="CHEBI:57540"/>
    </ligand>
</feature>
<feature type="binding site" evidence="1">
    <location>
        <position position="301"/>
    </location>
    <ligand>
        <name>NAD(+)</name>
        <dbReference type="ChEBI" id="CHEBI:57540"/>
    </ligand>
</feature>
<feature type="binding site" evidence="1">
    <location>
        <position position="395"/>
    </location>
    <ligand>
        <name>Zn(2+)</name>
        <dbReference type="ChEBI" id="CHEBI:29105"/>
    </ligand>
</feature>
<feature type="binding site" evidence="1">
    <location>
        <position position="398"/>
    </location>
    <ligand>
        <name>Zn(2+)</name>
        <dbReference type="ChEBI" id="CHEBI:29105"/>
    </ligand>
</feature>
<feature type="binding site" evidence="1">
    <location>
        <position position="411"/>
    </location>
    <ligand>
        <name>Zn(2+)</name>
        <dbReference type="ChEBI" id="CHEBI:29105"/>
    </ligand>
</feature>
<feature type="binding site" evidence="1">
    <location>
        <position position="416"/>
    </location>
    <ligand>
        <name>Zn(2+)</name>
        <dbReference type="ChEBI" id="CHEBI:29105"/>
    </ligand>
</feature>
<proteinExistence type="inferred from homology"/>
<sequence>MTKQEYEKAVDTLNAWAKAYYDEDEPLASDEEYDALYHAVLAFEQANPSEISLFSPTKRVGGGVKEGFSKASHIKRMWSMEDIFSLGELDAWLKRGEKENLTFVAEPKFDGASLNLLYENGVLVRAITRGDGVTGEDVTQNARTISSVPKSISYKGLIEIRGEVVIRKDDFELLNMERAKEGEAPLSNPRNAAAGSLRQLDSAVTAKRKLLFIPWGVGEQSLGLKDHSEVMKFVRDLGFERDDFFKILKKDELEAAYNELLANRDSKSVMMDGMVIRVNDLARCEQLGYTVKFPKFMVAFKFPAIEKVTRLKDVALQVGRSGVVTPVGVLDEVNIDGANVKSATLHNFDEIERLGVMKNDYIGIIRSGDVIPKITKVFKDRRDGSEQAIERPKFCPVCGSHLLDEGVFVKCQNLSCRARVVGSIIHYASKKCLNIDGLGDAIVNLLFDKGLIACIKDIYGLKFDDLMSLEGFKEKKVNNLLNAIEASKGAELSRFITGLGCEHIGEVAAKKLASSFGLDWLDASFEELTALEGFGVEMANSLIDFAEVNRDEILALSQIVQPSVTQVQSISNALSGKTVVITGTLSRPRDEIKAELESFGAKVSGSVSKKTDFVLAGEEAGSKLDKANELGVLVIDESEYERLKLEV</sequence>
<name>DNLJ_CAMC1</name>
<protein>
    <recommendedName>
        <fullName evidence="1">DNA ligase</fullName>
        <ecNumber evidence="1">6.5.1.2</ecNumber>
    </recommendedName>
    <alternativeName>
        <fullName evidence="1">Polydeoxyribonucleotide synthase [NAD(+)]</fullName>
    </alternativeName>
</protein>
<keyword id="KW-0227">DNA damage</keyword>
<keyword id="KW-0234">DNA repair</keyword>
<keyword id="KW-0235">DNA replication</keyword>
<keyword id="KW-0436">Ligase</keyword>
<keyword id="KW-0460">Magnesium</keyword>
<keyword id="KW-0464">Manganese</keyword>
<keyword id="KW-0479">Metal-binding</keyword>
<keyword id="KW-0520">NAD</keyword>
<keyword id="KW-0862">Zinc</keyword>
<gene>
    <name evidence="1" type="primary">ligA</name>
    <name type="ordered locus">Ccon26_12910</name>
    <name type="ORF">CCC13826_2023</name>
</gene>
<comment type="function">
    <text evidence="1">DNA ligase that catalyzes the formation of phosphodiester linkages between 5'-phosphoryl and 3'-hydroxyl groups in double-stranded DNA using NAD as a coenzyme and as the energy source for the reaction. It is essential for DNA replication and repair of damaged DNA.</text>
</comment>
<comment type="catalytic activity">
    <reaction evidence="1">
        <text>NAD(+) + (deoxyribonucleotide)n-3'-hydroxyl + 5'-phospho-(deoxyribonucleotide)m = (deoxyribonucleotide)n+m + AMP + beta-nicotinamide D-nucleotide.</text>
        <dbReference type="EC" id="6.5.1.2"/>
    </reaction>
</comment>
<comment type="cofactor">
    <cofactor evidence="1">
        <name>Mg(2+)</name>
        <dbReference type="ChEBI" id="CHEBI:18420"/>
    </cofactor>
    <cofactor evidence="1">
        <name>Mn(2+)</name>
        <dbReference type="ChEBI" id="CHEBI:29035"/>
    </cofactor>
</comment>
<comment type="similarity">
    <text evidence="1">Belongs to the NAD-dependent DNA ligase family. LigA subfamily.</text>
</comment>
<reference key="1">
    <citation type="submission" date="2007-10" db="EMBL/GenBank/DDBJ databases">
        <title>Genome sequence of Campylobacter concisus 13826 isolated from human feces.</title>
        <authorList>
            <person name="Fouts D.E."/>
            <person name="Mongodin E.F."/>
            <person name="Puiu D."/>
            <person name="Sebastian Y."/>
            <person name="Miller W.G."/>
            <person name="Mandrell R.E."/>
            <person name="On S."/>
            <person name="Nelson K.E."/>
        </authorList>
    </citation>
    <scope>NUCLEOTIDE SEQUENCE [LARGE SCALE GENOMIC DNA]</scope>
    <source>
        <strain>13826</strain>
    </source>
</reference>
<accession>A7ZED8</accession>
<organism>
    <name type="scientific">Campylobacter concisus (strain 13826)</name>
    <dbReference type="NCBI Taxonomy" id="360104"/>
    <lineage>
        <taxon>Bacteria</taxon>
        <taxon>Pseudomonadati</taxon>
        <taxon>Campylobacterota</taxon>
        <taxon>Epsilonproteobacteria</taxon>
        <taxon>Campylobacterales</taxon>
        <taxon>Campylobacteraceae</taxon>
        <taxon>Campylobacter</taxon>
    </lineage>
</organism>
<dbReference type="EC" id="6.5.1.2" evidence="1"/>
<dbReference type="EMBL" id="CP000792">
    <property type="protein sequence ID" value="EAT98690.1"/>
    <property type="molecule type" value="Genomic_DNA"/>
</dbReference>
<dbReference type="RefSeq" id="WP_012140056.1">
    <property type="nucleotide sequence ID" value="NC_009802.2"/>
</dbReference>
<dbReference type="SMR" id="A7ZED8"/>
<dbReference type="STRING" id="360104.CCC13826_2023"/>
<dbReference type="KEGG" id="cco:CCC13826_2023"/>
<dbReference type="eggNOG" id="COG0272">
    <property type="taxonomic scope" value="Bacteria"/>
</dbReference>
<dbReference type="HOGENOM" id="CLU_007764_2_0_7"/>
<dbReference type="OrthoDB" id="9759736at2"/>
<dbReference type="Proteomes" id="UP000001121">
    <property type="component" value="Chromosome"/>
</dbReference>
<dbReference type="GO" id="GO:0003677">
    <property type="term" value="F:DNA binding"/>
    <property type="evidence" value="ECO:0007669"/>
    <property type="project" value="InterPro"/>
</dbReference>
<dbReference type="GO" id="GO:0003911">
    <property type="term" value="F:DNA ligase (NAD+) activity"/>
    <property type="evidence" value="ECO:0007669"/>
    <property type="project" value="UniProtKB-UniRule"/>
</dbReference>
<dbReference type="GO" id="GO:0046872">
    <property type="term" value="F:metal ion binding"/>
    <property type="evidence" value="ECO:0007669"/>
    <property type="project" value="UniProtKB-KW"/>
</dbReference>
<dbReference type="GO" id="GO:0006281">
    <property type="term" value="P:DNA repair"/>
    <property type="evidence" value="ECO:0007669"/>
    <property type="project" value="UniProtKB-KW"/>
</dbReference>
<dbReference type="GO" id="GO:0006260">
    <property type="term" value="P:DNA replication"/>
    <property type="evidence" value="ECO:0007669"/>
    <property type="project" value="UniProtKB-KW"/>
</dbReference>
<dbReference type="CDD" id="cd17748">
    <property type="entry name" value="BRCT_DNA_ligase_like"/>
    <property type="match status" value="1"/>
</dbReference>
<dbReference type="CDD" id="cd00114">
    <property type="entry name" value="LIGANc"/>
    <property type="match status" value="1"/>
</dbReference>
<dbReference type="FunFam" id="1.10.150.20:FF:000007">
    <property type="entry name" value="DNA ligase"/>
    <property type="match status" value="1"/>
</dbReference>
<dbReference type="Gene3D" id="1.10.150.20">
    <property type="entry name" value="5' to 3' exonuclease, C-terminal subdomain"/>
    <property type="match status" value="2"/>
</dbReference>
<dbReference type="Gene3D" id="3.40.50.10190">
    <property type="entry name" value="BRCT domain"/>
    <property type="match status" value="1"/>
</dbReference>
<dbReference type="Gene3D" id="3.30.470.30">
    <property type="entry name" value="DNA ligase/mRNA capping enzyme"/>
    <property type="match status" value="1"/>
</dbReference>
<dbReference type="Gene3D" id="1.10.287.610">
    <property type="entry name" value="Helix hairpin bin"/>
    <property type="match status" value="1"/>
</dbReference>
<dbReference type="Gene3D" id="2.40.50.140">
    <property type="entry name" value="Nucleic acid-binding proteins"/>
    <property type="match status" value="1"/>
</dbReference>
<dbReference type="HAMAP" id="MF_01588">
    <property type="entry name" value="DNA_ligase_A"/>
    <property type="match status" value="1"/>
</dbReference>
<dbReference type="InterPro" id="IPR001357">
    <property type="entry name" value="BRCT_dom"/>
</dbReference>
<dbReference type="InterPro" id="IPR036420">
    <property type="entry name" value="BRCT_dom_sf"/>
</dbReference>
<dbReference type="InterPro" id="IPR041663">
    <property type="entry name" value="DisA/LigA_HHH"/>
</dbReference>
<dbReference type="InterPro" id="IPR001679">
    <property type="entry name" value="DNA_ligase"/>
</dbReference>
<dbReference type="InterPro" id="IPR018239">
    <property type="entry name" value="DNA_ligase_AS"/>
</dbReference>
<dbReference type="InterPro" id="IPR013839">
    <property type="entry name" value="DNAligase_adenylation"/>
</dbReference>
<dbReference type="InterPro" id="IPR013840">
    <property type="entry name" value="DNAligase_N"/>
</dbReference>
<dbReference type="InterPro" id="IPR003583">
    <property type="entry name" value="Hlx-hairpin-Hlx_DNA-bd_motif"/>
</dbReference>
<dbReference type="InterPro" id="IPR012340">
    <property type="entry name" value="NA-bd_OB-fold"/>
</dbReference>
<dbReference type="InterPro" id="IPR004150">
    <property type="entry name" value="NAD_DNA_ligase_OB"/>
</dbReference>
<dbReference type="InterPro" id="IPR010994">
    <property type="entry name" value="RuvA_2-like"/>
</dbReference>
<dbReference type="NCBIfam" id="TIGR00575">
    <property type="entry name" value="dnlj"/>
    <property type="match status" value="1"/>
</dbReference>
<dbReference type="NCBIfam" id="NF005932">
    <property type="entry name" value="PRK07956.1"/>
    <property type="match status" value="1"/>
</dbReference>
<dbReference type="Pfam" id="PF00533">
    <property type="entry name" value="BRCT"/>
    <property type="match status" value="1"/>
</dbReference>
<dbReference type="Pfam" id="PF01653">
    <property type="entry name" value="DNA_ligase_aden"/>
    <property type="match status" value="1"/>
</dbReference>
<dbReference type="Pfam" id="PF03120">
    <property type="entry name" value="DNA_ligase_OB"/>
    <property type="match status" value="1"/>
</dbReference>
<dbReference type="Pfam" id="PF12826">
    <property type="entry name" value="HHH_2"/>
    <property type="match status" value="1"/>
</dbReference>
<dbReference type="PIRSF" id="PIRSF001604">
    <property type="entry name" value="LigA"/>
    <property type="match status" value="1"/>
</dbReference>
<dbReference type="SMART" id="SM00292">
    <property type="entry name" value="BRCT"/>
    <property type="match status" value="1"/>
</dbReference>
<dbReference type="SMART" id="SM00278">
    <property type="entry name" value="HhH1"/>
    <property type="match status" value="3"/>
</dbReference>
<dbReference type="SMART" id="SM00532">
    <property type="entry name" value="LIGANc"/>
    <property type="match status" value="1"/>
</dbReference>
<dbReference type="SUPFAM" id="SSF52113">
    <property type="entry name" value="BRCT domain"/>
    <property type="match status" value="1"/>
</dbReference>
<dbReference type="SUPFAM" id="SSF56091">
    <property type="entry name" value="DNA ligase/mRNA capping enzyme, catalytic domain"/>
    <property type="match status" value="1"/>
</dbReference>
<dbReference type="SUPFAM" id="SSF50249">
    <property type="entry name" value="Nucleic acid-binding proteins"/>
    <property type="match status" value="1"/>
</dbReference>
<dbReference type="SUPFAM" id="SSF47781">
    <property type="entry name" value="RuvA domain 2-like"/>
    <property type="match status" value="1"/>
</dbReference>
<dbReference type="PROSITE" id="PS50172">
    <property type="entry name" value="BRCT"/>
    <property type="match status" value="1"/>
</dbReference>
<dbReference type="PROSITE" id="PS01055">
    <property type="entry name" value="DNA_LIGASE_N1"/>
    <property type="match status" value="1"/>
</dbReference>
<evidence type="ECO:0000255" key="1">
    <source>
        <dbReference type="HAMAP-Rule" id="MF_01588"/>
    </source>
</evidence>